<keyword id="KW-0067">ATP-binding</keyword>
<keyword id="KW-0227">DNA damage</keyword>
<keyword id="KW-0234">DNA repair</keyword>
<keyword id="KW-0238">DNA-binding</keyword>
<keyword id="KW-0269">Exonuclease</keyword>
<keyword id="KW-0347">Helicase</keyword>
<keyword id="KW-0378">Hydrolase</keyword>
<keyword id="KW-0413">Isomerase</keyword>
<keyword id="KW-0540">Nuclease</keyword>
<keyword id="KW-0547">Nucleotide-binding</keyword>
<keyword id="KW-1185">Reference proteome</keyword>
<reference key="1">
    <citation type="journal article" date="2004" name="Nucleic Acids Res.">
        <title>Thermoadaptation trait revealed by the genome sequence of thermophilic Geobacillus kaustophilus.</title>
        <authorList>
            <person name="Takami H."/>
            <person name="Takaki Y."/>
            <person name="Chee G.-J."/>
            <person name="Nishi S."/>
            <person name="Shimamura S."/>
            <person name="Suzuki H."/>
            <person name="Matsui S."/>
            <person name="Uchiyama I."/>
        </authorList>
    </citation>
    <scope>NUCLEOTIDE SEQUENCE [LARGE SCALE GENOMIC DNA]</scope>
    <source>
        <strain>HTA426</strain>
    </source>
</reference>
<comment type="function">
    <text evidence="1">The heterodimer acts as both an ATP-dependent DNA helicase and an ATP-dependent, dual-direction single-stranded exonuclease. Recognizes the chi site generating a DNA molecule suitable for the initiation of homologous recombination. The AddA nuclease domain is required for chi fragment generation; this subunit has the helicase and 3' -&gt; 5' nuclease activities.</text>
</comment>
<comment type="catalytic activity">
    <reaction evidence="1">
        <text>Couples ATP hydrolysis with the unwinding of duplex DNA by translocating in the 3'-5' direction.</text>
        <dbReference type="EC" id="5.6.2.4"/>
    </reaction>
</comment>
<comment type="catalytic activity">
    <reaction evidence="1">
        <text>ATP + H2O = ADP + phosphate + H(+)</text>
        <dbReference type="Rhea" id="RHEA:13065"/>
        <dbReference type="ChEBI" id="CHEBI:15377"/>
        <dbReference type="ChEBI" id="CHEBI:15378"/>
        <dbReference type="ChEBI" id="CHEBI:30616"/>
        <dbReference type="ChEBI" id="CHEBI:43474"/>
        <dbReference type="ChEBI" id="CHEBI:456216"/>
        <dbReference type="EC" id="5.6.2.4"/>
    </reaction>
</comment>
<comment type="cofactor">
    <cofactor evidence="1">
        <name>Mg(2+)</name>
        <dbReference type="ChEBI" id="CHEBI:18420"/>
    </cofactor>
</comment>
<comment type="subunit">
    <text evidence="1">Heterodimer of AddA and AddB/RexB.</text>
</comment>
<comment type="similarity">
    <text evidence="1">Belongs to the helicase family. AddA subfamily.</text>
</comment>
<name>ADDA_GEOKA</name>
<evidence type="ECO:0000255" key="1">
    <source>
        <dbReference type="HAMAP-Rule" id="MF_01451"/>
    </source>
</evidence>
<protein>
    <recommendedName>
        <fullName evidence="1">ATP-dependent helicase/nuclease subunit A</fullName>
        <ecNumber evidence="1">3.1.-.-</ecNumber>
        <ecNumber evidence="1">5.6.2.4</ecNumber>
    </recommendedName>
    <alternativeName>
        <fullName evidence="1">ATP-dependent helicase/nuclease AddA</fullName>
    </alternativeName>
    <alternativeName>
        <fullName evidence="1">DNA 3'-5' helicase AddA</fullName>
    </alternativeName>
</protein>
<proteinExistence type="inferred from homology"/>
<feature type="chain" id="PRO_0000379272" description="ATP-dependent helicase/nuclease subunit A">
    <location>
        <begin position="1"/>
        <end position="1242"/>
    </location>
</feature>
<feature type="domain" description="UvrD-like helicase ATP-binding" evidence="1">
    <location>
        <begin position="12"/>
        <end position="487"/>
    </location>
</feature>
<feature type="domain" description="UvrD-like helicase C-terminal" evidence="1">
    <location>
        <begin position="514"/>
        <end position="808"/>
    </location>
</feature>
<feature type="binding site" evidence="1">
    <location>
        <begin position="33"/>
        <end position="40"/>
    </location>
    <ligand>
        <name>ATP</name>
        <dbReference type="ChEBI" id="CHEBI:30616"/>
    </ligand>
</feature>
<dbReference type="EC" id="3.1.-.-" evidence="1"/>
<dbReference type="EC" id="5.6.2.4" evidence="1"/>
<dbReference type="EMBL" id="BA000043">
    <property type="protein sequence ID" value="BAD74967.1"/>
    <property type="molecule type" value="Genomic_DNA"/>
</dbReference>
<dbReference type="RefSeq" id="WP_011230185.1">
    <property type="nucleotide sequence ID" value="NC_006510.1"/>
</dbReference>
<dbReference type="SMR" id="Q5L263"/>
<dbReference type="STRING" id="235909.GK0682"/>
<dbReference type="KEGG" id="gka:GK0682"/>
<dbReference type="PATRIC" id="fig|235909.7.peg.761"/>
<dbReference type="eggNOG" id="COG1074">
    <property type="taxonomic scope" value="Bacteria"/>
</dbReference>
<dbReference type="HOGENOM" id="CLU_001114_3_1_9"/>
<dbReference type="Proteomes" id="UP000001172">
    <property type="component" value="Chromosome"/>
</dbReference>
<dbReference type="GO" id="GO:0005829">
    <property type="term" value="C:cytosol"/>
    <property type="evidence" value="ECO:0007669"/>
    <property type="project" value="TreeGrafter"/>
</dbReference>
<dbReference type="GO" id="GO:0033202">
    <property type="term" value="C:DNA helicase complex"/>
    <property type="evidence" value="ECO:0007669"/>
    <property type="project" value="TreeGrafter"/>
</dbReference>
<dbReference type="GO" id="GO:0043138">
    <property type="term" value="F:3'-5' DNA helicase activity"/>
    <property type="evidence" value="ECO:0007669"/>
    <property type="project" value="UniProtKB-UniRule"/>
</dbReference>
<dbReference type="GO" id="GO:0008408">
    <property type="term" value="F:3'-5' exonuclease activity"/>
    <property type="evidence" value="ECO:0007669"/>
    <property type="project" value="UniProtKB-UniRule"/>
</dbReference>
<dbReference type="GO" id="GO:0005524">
    <property type="term" value="F:ATP binding"/>
    <property type="evidence" value="ECO:0007669"/>
    <property type="project" value="UniProtKB-UniRule"/>
</dbReference>
<dbReference type="GO" id="GO:0016887">
    <property type="term" value="F:ATP hydrolysis activity"/>
    <property type="evidence" value="ECO:0007669"/>
    <property type="project" value="RHEA"/>
</dbReference>
<dbReference type="GO" id="GO:0003690">
    <property type="term" value="F:double-stranded DNA binding"/>
    <property type="evidence" value="ECO:0007669"/>
    <property type="project" value="UniProtKB-UniRule"/>
</dbReference>
<dbReference type="GO" id="GO:0000724">
    <property type="term" value="P:double-strand break repair via homologous recombination"/>
    <property type="evidence" value="ECO:0007669"/>
    <property type="project" value="UniProtKB-UniRule"/>
</dbReference>
<dbReference type="CDD" id="cd17932">
    <property type="entry name" value="DEXQc_UvrD"/>
    <property type="match status" value="1"/>
</dbReference>
<dbReference type="FunFam" id="3.40.50.300:FF:001196">
    <property type="entry name" value="ATP-dependent helicase/nuclease subunit A"/>
    <property type="match status" value="1"/>
</dbReference>
<dbReference type="FunFam" id="3.40.50.300:FF:001236">
    <property type="entry name" value="ATP-dependent helicase/nuclease subunit A"/>
    <property type="match status" value="1"/>
</dbReference>
<dbReference type="Gene3D" id="3.90.320.10">
    <property type="match status" value="1"/>
</dbReference>
<dbReference type="Gene3D" id="6.10.250.2380">
    <property type="match status" value="1"/>
</dbReference>
<dbReference type="Gene3D" id="3.40.50.300">
    <property type="entry name" value="P-loop containing nucleotide triphosphate hydrolases"/>
    <property type="match status" value="3"/>
</dbReference>
<dbReference type="HAMAP" id="MF_01451">
    <property type="entry name" value="AddA"/>
    <property type="match status" value="1"/>
</dbReference>
<dbReference type="InterPro" id="IPR014152">
    <property type="entry name" value="AddA"/>
</dbReference>
<dbReference type="InterPro" id="IPR014017">
    <property type="entry name" value="DNA_helicase_UvrD-like_C"/>
</dbReference>
<dbReference type="InterPro" id="IPR000212">
    <property type="entry name" value="DNA_helicase_UvrD/REP"/>
</dbReference>
<dbReference type="InterPro" id="IPR027417">
    <property type="entry name" value="P-loop_NTPase"/>
</dbReference>
<dbReference type="InterPro" id="IPR011604">
    <property type="entry name" value="PDDEXK-like_dom_sf"/>
</dbReference>
<dbReference type="InterPro" id="IPR038726">
    <property type="entry name" value="PDDEXK_AddAB-type"/>
</dbReference>
<dbReference type="InterPro" id="IPR011335">
    <property type="entry name" value="Restrct_endonuc-II-like"/>
</dbReference>
<dbReference type="InterPro" id="IPR014016">
    <property type="entry name" value="UvrD-like_ATP-bd"/>
</dbReference>
<dbReference type="NCBIfam" id="TIGR02785">
    <property type="entry name" value="addA_Gpos"/>
    <property type="match status" value="1"/>
</dbReference>
<dbReference type="PANTHER" id="PTHR11070:SF48">
    <property type="entry name" value="ATP-DEPENDENT HELICASE_NUCLEASE SUBUNIT A"/>
    <property type="match status" value="1"/>
</dbReference>
<dbReference type="PANTHER" id="PTHR11070">
    <property type="entry name" value="UVRD / RECB / PCRA DNA HELICASE FAMILY MEMBER"/>
    <property type="match status" value="1"/>
</dbReference>
<dbReference type="Pfam" id="PF12705">
    <property type="entry name" value="PDDEXK_1"/>
    <property type="match status" value="1"/>
</dbReference>
<dbReference type="Pfam" id="PF00580">
    <property type="entry name" value="UvrD-helicase"/>
    <property type="match status" value="1"/>
</dbReference>
<dbReference type="Pfam" id="PF13361">
    <property type="entry name" value="UvrD_C"/>
    <property type="match status" value="1"/>
</dbReference>
<dbReference type="SUPFAM" id="SSF52540">
    <property type="entry name" value="P-loop containing nucleoside triphosphate hydrolases"/>
    <property type="match status" value="1"/>
</dbReference>
<dbReference type="SUPFAM" id="SSF52980">
    <property type="entry name" value="Restriction endonuclease-like"/>
    <property type="match status" value="1"/>
</dbReference>
<dbReference type="PROSITE" id="PS51198">
    <property type="entry name" value="UVRD_HELICASE_ATP_BIND"/>
    <property type="match status" value="1"/>
</dbReference>
<dbReference type="PROSITE" id="PS51217">
    <property type="entry name" value="UVRD_HELICASE_CTER"/>
    <property type="match status" value="1"/>
</dbReference>
<sequence length="1242" mass="141270">MNATIRPKPAGSRWTDEQWKAIAAGGRDILVAAAAGSGKTAVLVERIIQKVTAEEGAVDIDRLLVVTFTNAAAAEMKARIGEALERELAKRPHSLHLRRQLSLLPRAAISTLHSFCLDVIRKYYYLLDLDPSFRIADETEIELLKEDVLEELLEEEYGKPDNERFFAVVDAYTGDRSDAELQEMIVALYEFSRSHPEPDEWLAGLTSMYDVDERTDIKTLPAARYIAQHAAMELAAARRLIRRALELAEEPGGPRPYAERLREDRDMITDLETRLSGPWAELHRALKALSFGRLPACRGKDYDERLIDEAKSLRDQAKKKVEALRDNVFSLDPSVWLRHMREMKPIVETIANLVRRFAVMFQAAKREKGIVDFSDLEHYCLHILRRRDPETGEWQPSPAALEYQAQFDEVLVDEYQDTNLVQEAILQLVKKGSERTGNLFMVGDVKQSIYRFRLAEPMLFLDKYKRFTADGEEGGMKIDLASNFRSRREVLDGTNFLFAQLMGETVGEMVYDEAAQLKYGADYPEGEDAAPEVMIINRQRAAEEDEEEAAEWEAAELEARLMAKKIKEIVSAPFYVYDRSSGQPRRAMYRDIVILVRSMTNAPQMIEQLQAQGIPAAADLSSGYFQATEISIMLSLLKVIDNPHQDIPLAAVLRSPLFRFDENELAMIRLADPKGTFYEALCSFRQKPAETKEEANAQRKAAAFLERLEGWRTMARRRSLADLIWQLYRDTQFYDFVGALPGGRQRQANLRALYDRARQYESTSFRGLFRFLRFIERLQERGDDLGAARPLGEQEDVVRIMTIHSSKGLEFPIVFLAGLARPFHTRDLHHPYLLDKELGFAARFVHPRLRISYPTLPLLAIQTKKRLELLAEEMRILYVALTRAKEKLYLLASVNDAAKEIEKWKSAASERGWLLPDDVRASARSYLDWIGRALIRHRDGGALAGTKAPEEVASHPSVWRVAIVPAADLRGAEAAREEMDGGVLLALEQGRPVPVEGGWQKEVKRRLLWRYSYEKETAVRAKQSVSELKEQRALFGEQADEWRPRQGTAPVFSRPRFMQEKTLTPAEKGTALHVVMRHLDLQAPLDESWIRSQIVRLVEKELLSAEQAEAVDPAAIAAFFTADLGRRLCAAREVHREVPFSLGLKAAELYGGEGTESGRRVLVQGVIDCVFADECGYVMIDYKTDEVVHRFAGQKEEAARFLLGRYGTQMRLYRRAIEQIWRAPVAECYLYSFDGGFVVAVE</sequence>
<gene>
    <name evidence="1" type="primary">addA</name>
    <name type="ordered locus">GK0682</name>
</gene>
<organism>
    <name type="scientific">Geobacillus kaustophilus (strain HTA426)</name>
    <dbReference type="NCBI Taxonomy" id="235909"/>
    <lineage>
        <taxon>Bacteria</taxon>
        <taxon>Bacillati</taxon>
        <taxon>Bacillota</taxon>
        <taxon>Bacilli</taxon>
        <taxon>Bacillales</taxon>
        <taxon>Anoxybacillaceae</taxon>
        <taxon>Geobacillus</taxon>
        <taxon>Geobacillus thermoleovorans group</taxon>
    </lineage>
</organism>
<accession>Q5L263</accession>